<dbReference type="EMBL" id="AAEY01000032">
    <property type="protein sequence ID" value="EAL20052.1"/>
    <property type="status" value="ALT_SEQ"/>
    <property type="molecule type" value="Genomic_DNA"/>
</dbReference>
<dbReference type="RefSeq" id="XP_774699.1">
    <property type="nucleotide sequence ID" value="XM_769606.1"/>
</dbReference>
<dbReference type="SMR" id="P0CR79"/>
<dbReference type="GeneID" id="4936930"/>
<dbReference type="KEGG" id="cnb:CNBF3780"/>
<dbReference type="HOGENOM" id="CLU_010104_2_1_1"/>
<dbReference type="OrthoDB" id="9336at5206"/>
<dbReference type="GO" id="GO:0010008">
    <property type="term" value="C:endosome membrane"/>
    <property type="evidence" value="ECO:0007669"/>
    <property type="project" value="UniProtKB-SubCell"/>
</dbReference>
<dbReference type="GO" id="GO:0033565">
    <property type="term" value="C:ESCRT-0 complex"/>
    <property type="evidence" value="ECO:0007669"/>
    <property type="project" value="TreeGrafter"/>
</dbReference>
<dbReference type="GO" id="GO:0035091">
    <property type="term" value="F:phosphatidylinositol binding"/>
    <property type="evidence" value="ECO:0007669"/>
    <property type="project" value="InterPro"/>
</dbReference>
<dbReference type="GO" id="GO:0043130">
    <property type="term" value="F:ubiquitin binding"/>
    <property type="evidence" value="ECO:0007669"/>
    <property type="project" value="InterPro"/>
</dbReference>
<dbReference type="GO" id="GO:0043328">
    <property type="term" value="P:protein transport to vacuole involved in ubiquitin-dependent protein catabolic process via the multivesicular body sorting pathway"/>
    <property type="evidence" value="ECO:0007669"/>
    <property type="project" value="TreeGrafter"/>
</dbReference>
<dbReference type="CDD" id="cd21386">
    <property type="entry name" value="GAT_Hse1"/>
    <property type="match status" value="1"/>
</dbReference>
<dbReference type="CDD" id="cd16978">
    <property type="entry name" value="VHS_HSE1"/>
    <property type="match status" value="1"/>
</dbReference>
<dbReference type="Gene3D" id="1.20.5.1940">
    <property type="match status" value="1"/>
</dbReference>
<dbReference type="Gene3D" id="1.25.40.90">
    <property type="match status" value="1"/>
</dbReference>
<dbReference type="Gene3D" id="2.30.30.40">
    <property type="entry name" value="SH3 Domains"/>
    <property type="match status" value="1"/>
</dbReference>
<dbReference type="InterPro" id="IPR008942">
    <property type="entry name" value="ENTH_VHS"/>
</dbReference>
<dbReference type="InterPro" id="IPR036028">
    <property type="entry name" value="SH3-like_dom_sf"/>
</dbReference>
<dbReference type="InterPro" id="IPR001452">
    <property type="entry name" value="SH3_domain"/>
</dbReference>
<dbReference type="InterPro" id="IPR050670">
    <property type="entry name" value="STAM"/>
</dbReference>
<dbReference type="InterPro" id="IPR003903">
    <property type="entry name" value="UIM_dom"/>
</dbReference>
<dbReference type="InterPro" id="IPR002014">
    <property type="entry name" value="VHS_dom"/>
</dbReference>
<dbReference type="PANTHER" id="PTHR45929">
    <property type="entry name" value="JAK PATHWAY SIGNAL TRANSDUCTION ADAPTOR MOLECULE"/>
    <property type="match status" value="1"/>
</dbReference>
<dbReference type="PANTHER" id="PTHR45929:SF3">
    <property type="entry name" value="JAK PATHWAY SIGNAL TRANSDUCTION ADAPTOR MOLECULE"/>
    <property type="match status" value="1"/>
</dbReference>
<dbReference type="Pfam" id="PF00018">
    <property type="entry name" value="SH3_1"/>
    <property type="match status" value="1"/>
</dbReference>
<dbReference type="Pfam" id="PF00790">
    <property type="entry name" value="VHS"/>
    <property type="match status" value="1"/>
</dbReference>
<dbReference type="PRINTS" id="PR00499">
    <property type="entry name" value="P67PHOX"/>
</dbReference>
<dbReference type="PRINTS" id="PR00452">
    <property type="entry name" value="SH3DOMAIN"/>
</dbReference>
<dbReference type="SMART" id="SM00326">
    <property type="entry name" value="SH3"/>
    <property type="match status" value="1"/>
</dbReference>
<dbReference type="SMART" id="SM00288">
    <property type="entry name" value="VHS"/>
    <property type="match status" value="1"/>
</dbReference>
<dbReference type="SUPFAM" id="SSF48464">
    <property type="entry name" value="ENTH/VHS domain"/>
    <property type="match status" value="1"/>
</dbReference>
<dbReference type="SUPFAM" id="SSF50044">
    <property type="entry name" value="SH3-domain"/>
    <property type="match status" value="1"/>
</dbReference>
<dbReference type="PROSITE" id="PS50002">
    <property type="entry name" value="SH3"/>
    <property type="match status" value="1"/>
</dbReference>
<dbReference type="PROSITE" id="PS50330">
    <property type="entry name" value="UIM"/>
    <property type="match status" value="1"/>
</dbReference>
<dbReference type="PROSITE" id="PS50179">
    <property type="entry name" value="VHS"/>
    <property type="match status" value="1"/>
</dbReference>
<reference key="1">
    <citation type="journal article" date="2005" name="Science">
        <title>The genome of the basidiomycetous yeast and human pathogen Cryptococcus neoformans.</title>
        <authorList>
            <person name="Loftus B.J."/>
            <person name="Fung E."/>
            <person name="Roncaglia P."/>
            <person name="Rowley D."/>
            <person name="Amedeo P."/>
            <person name="Bruno D."/>
            <person name="Vamathevan J."/>
            <person name="Miranda M."/>
            <person name="Anderson I.J."/>
            <person name="Fraser J.A."/>
            <person name="Allen J.E."/>
            <person name="Bosdet I.E."/>
            <person name="Brent M.R."/>
            <person name="Chiu R."/>
            <person name="Doering T.L."/>
            <person name="Donlin M.J."/>
            <person name="D'Souza C.A."/>
            <person name="Fox D.S."/>
            <person name="Grinberg V."/>
            <person name="Fu J."/>
            <person name="Fukushima M."/>
            <person name="Haas B.J."/>
            <person name="Huang J.C."/>
            <person name="Janbon G."/>
            <person name="Jones S.J.M."/>
            <person name="Koo H.L."/>
            <person name="Krzywinski M.I."/>
            <person name="Kwon-Chung K.J."/>
            <person name="Lengeler K.B."/>
            <person name="Maiti R."/>
            <person name="Marra M.A."/>
            <person name="Marra R.E."/>
            <person name="Mathewson C.A."/>
            <person name="Mitchell T.G."/>
            <person name="Pertea M."/>
            <person name="Riggs F.R."/>
            <person name="Salzberg S.L."/>
            <person name="Schein J.E."/>
            <person name="Shvartsbeyn A."/>
            <person name="Shin H."/>
            <person name="Shumway M."/>
            <person name="Specht C.A."/>
            <person name="Suh B.B."/>
            <person name="Tenney A."/>
            <person name="Utterback T.R."/>
            <person name="Wickes B.L."/>
            <person name="Wortman J.R."/>
            <person name="Wye N.H."/>
            <person name="Kronstad J.W."/>
            <person name="Lodge J.K."/>
            <person name="Heitman J."/>
            <person name="Davis R.W."/>
            <person name="Fraser C.M."/>
            <person name="Hyman R.W."/>
        </authorList>
    </citation>
    <scope>NUCLEOTIDE SEQUENCE [LARGE SCALE GENOMIC DNA]</scope>
    <source>
        <strain>B-3501A</strain>
    </source>
</reference>
<protein>
    <recommendedName>
        <fullName>Class E vacuolar protein-sorting machinery protein HSE1</fullName>
    </recommendedName>
</protein>
<comment type="function">
    <text evidence="1">Component of the ESCRT-0 complex which is the sorting receptor for ubiquitinated cargo proteins at the multivesicular body (MVB).</text>
</comment>
<comment type="subunit">
    <text evidence="1">Component of the ESCRT-0 complex composed of HSE1 and VPS27.</text>
</comment>
<comment type="subcellular location">
    <subcellularLocation>
        <location evidence="1">Endosome membrane</location>
        <topology evidence="1">Peripheral membrane protein</topology>
        <orientation evidence="1">Cytoplasmic side</orientation>
    </subcellularLocation>
</comment>
<comment type="similarity">
    <text evidence="6">Belongs to the STAM family.</text>
</comment>
<comment type="sequence caution" evidence="6">
    <conflict type="erroneous gene model prediction">
        <sequence resource="EMBL-CDS" id="EAL20052"/>
    </conflict>
</comment>
<evidence type="ECO:0000250" key="1"/>
<evidence type="ECO:0000255" key="2">
    <source>
        <dbReference type="PROSITE-ProRule" id="PRU00192"/>
    </source>
</evidence>
<evidence type="ECO:0000255" key="3">
    <source>
        <dbReference type="PROSITE-ProRule" id="PRU00213"/>
    </source>
</evidence>
<evidence type="ECO:0000255" key="4">
    <source>
        <dbReference type="PROSITE-ProRule" id="PRU00218"/>
    </source>
</evidence>
<evidence type="ECO:0000256" key="5">
    <source>
        <dbReference type="SAM" id="MobiDB-lite"/>
    </source>
</evidence>
<evidence type="ECO:0000305" key="6"/>
<sequence>MFSTATSPYDDLVIKATDENLASEDWALNMDVCDKVSSDGQNGARQAVTALQKRLSHRNPNVQIYALELANSLAQNCGKDLLGELSSRNWTSALDRLINDRATSTPVKKKALSFVKSWAKQIEETGDPNLGLMGELYDQLRAKNHVFDEPEPTPESAEEARRRQEEEELQRVLELSKQDKGGRSLFTYQPSGSAGASSSSAANNNTSPSIPQSQAQPLAQDQAQSQAAPQVTGYAPQPQKIYSPQPLEPEPPRVDLNTATCVRAIYPFTGQEVGELDFERGDVIKVLDRGFKEWWRGACNGKIGIFPVTYVEALPEPTPKELQEKAQEEARVFASLGLVDQLLQTLKGIDPARGDKLDDHPEIEEMYQASVALQGQINTLIKKYSDQKAELEHMNANFIRAMGQYEELRNGPPLVQAQPFGYVPPQPQPLLQQQNSYSYQQYPQQPQQQPQPYAQAPYAQQAQPQLQPEQYAQQTPSPAAQSQASYTAQQQPYPAQVQQDPAAASPPPNQPFYHHGGSTTSVNRIPSAQTAVQPQPHGAPSFPPSSPPTRQVTEPGVAGLGAGDQQAWDQYYQQHGQQAPHSSQHPSQPQSQPQSQPQSQPQSQQGSYYPAHAQAQGYQAAYATVPDGRAYASPPLPGTQQGQGVEGVTAGMDRMSVHAP</sequence>
<keyword id="KW-0967">Endosome</keyword>
<keyword id="KW-0472">Membrane</keyword>
<keyword id="KW-0653">Protein transport</keyword>
<keyword id="KW-0728">SH3 domain</keyword>
<keyword id="KW-0813">Transport</keyword>
<proteinExistence type="inferred from homology"/>
<feature type="chain" id="PRO_0000410301" description="Class E vacuolar protein-sorting machinery protein HSE1">
    <location>
        <begin position="1"/>
        <end position="660"/>
    </location>
</feature>
<feature type="domain" description="VHS" evidence="4">
    <location>
        <begin position="16"/>
        <end position="148"/>
    </location>
</feature>
<feature type="domain" description="UIM" evidence="3">
    <location>
        <begin position="164"/>
        <end position="183"/>
    </location>
</feature>
<feature type="domain" description="SH3" evidence="2">
    <location>
        <begin position="257"/>
        <end position="316"/>
    </location>
</feature>
<feature type="region of interest" description="Disordered" evidence="5">
    <location>
        <begin position="146"/>
        <end position="254"/>
    </location>
</feature>
<feature type="region of interest" description="Disordered" evidence="5">
    <location>
        <begin position="437"/>
        <end position="660"/>
    </location>
</feature>
<feature type="compositionally biased region" description="Basic and acidic residues" evidence="5">
    <location>
        <begin position="158"/>
        <end position="182"/>
    </location>
</feature>
<feature type="compositionally biased region" description="Low complexity" evidence="5">
    <location>
        <begin position="190"/>
        <end position="230"/>
    </location>
</feature>
<feature type="compositionally biased region" description="Low complexity" evidence="5">
    <location>
        <begin position="437"/>
        <end position="503"/>
    </location>
</feature>
<feature type="compositionally biased region" description="Polar residues" evidence="5">
    <location>
        <begin position="517"/>
        <end position="533"/>
    </location>
</feature>
<feature type="compositionally biased region" description="Low complexity" evidence="5">
    <location>
        <begin position="573"/>
        <end position="623"/>
    </location>
</feature>
<feature type="compositionally biased region" description="Low complexity" evidence="5">
    <location>
        <begin position="638"/>
        <end position="651"/>
    </location>
</feature>
<organism>
    <name type="scientific">Cryptococcus neoformans var. neoformans serotype D (strain B-3501A)</name>
    <name type="common">Filobasidiella neoformans</name>
    <dbReference type="NCBI Taxonomy" id="283643"/>
    <lineage>
        <taxon>Eukaryota</taxon>
        <taxon>Fungi</taxon>
        <taxon>Dikarya</taxon>
        <taxon>Basidiomycota</taxon>
        <taxon>Agaricomycotina</taxon>
        <taxon>Tremellomycetes</taxon>
        <taxon>Tremellales</taxon>
        <taxon>Cryptococcaceae</taxon>
        <taxon>Cryptococcus</taxon>
        <taxon>Cryptococcus neoformans species complex</taxon>
    </lineage>
</organism>
<accession>P0CR79</accession>
<accession>Q55QF9</accession>
<accession>Q5KFQ8</accession>
<gene>
    <name type="primary">HSE1</name>
    <name type="ordered locus">CNBF3780</name>
</gene>
<name>HSE1_CRYNB</name>